<proteinExistence type="evidence at protein level"/>
<feature type="initiator methionine" description="Removed" evidence="9 14">
    <location>
        <position position="1"/>
    </location>
</feature>
<feature type="chain" id="PRO_0000219416" description="Moesin">
    <location>
        <begin position="2"/>
        <end position="577"/>
    </location>
</feature>
<feature type="domain" description="FERM" evidence="4">
    <location>
        <begin position="2"/>
        <end position="295"/>
    </location>
</feature>
<feature type="region of interest" description="Disordered" evidence="5">
    <location>
        <begin position="323"/>
        <end position="342"/>
    </location>
</feature>
<feature type="region of interest" description="Disordered" evidence="5">
    <location>
        <begin position="375"/>
        <end position="409"/>
    </location>
</feature>
<feature type="region of interest" description="Disordered" evidence="5">
    <location>
        <begin position="466"/>
        <end position="518"/>
    </location>
</feature>
<feature type="short sequence motif" description="[IL]-x-C-x-x-[DE] motif" evidence="25">
    <location>
        <begin position="115"/>
        <end position="120"/>
    </location>
</feature>
<feature type="compositionally biased region" description="Basic and acidic residues" evidence="5">
    <location>
        <begin position="375"/>
        <end position="401"/>
    </location>
</feature>
<feature type="compositionally biased region" description="Acidic residues" evidence="5">
    <location>
        <begin position="476"/>
        <end position="487"/>
    </location>
</feature>
<feature type="compositionally biased region" description="Basic and acidic residues" evidence="5">
    <location>
        <begin position="492"/>
        <end position="518"/>
    </location>
</feature>
<feature type="modified residue" description="Phosphoserine" evidence="29">
    <location>
        <position position="74"/>
    </location>
</feature>
<feature type="modified residue" description="N6-acetyllysine" evidence="27">
    <location>
        <position position="79"/>
    </location>
</feature>
<feature type="modified residue" description="N6-succinyllysine" evidence="3">
    <location>
        <position position="83"/>
    </location>
</feature>
<feature type="modified residue" description="Phosphotyrosine" evidence="28">
    <location>
        <position position="116"/>
    </location>
</feature>
<feature type="modified residue" description="S-nitrosocysteine" evidence="17">
    <location>
        <position position="117"/>
    </location>
</feature>
<feature type="modified residue" description="N6-acetyllysine" evidence="27">
    <location>
        <position position="139"/>
    </location>
</feature>
<feature type="modified residue" description="N6-acetyllysine" evidence="2">
    <location>
        <position position="165"/>
    </location>
</feature>
<feature type="modified residue" description="Phosphoserine" evidence="29">
    <location>
        <position position="407"/>
    </location>
</feature>
<feature type="modified residue" description="Phosphoserine" evidence="29">
    <location>
        <position position="527"/>
    </location>
</feature>
<feature type="modified residue" description="Phosphothreonine; by ROCK2 and STK10" evidence="15">
    <location>
        <position position="558"/>
    </location>
</feature>
<feature type="sequence variant" id="VAR_078026" description="In IMD50; decreased protein abundance in T cell; loss of T cell proliferation after T cell activation; does not affect immunologic synapses formation; decreased T cell migration in response to activation by chemokines; increased T cell adhesion in response to activation by integrins; dbSNP:rs1057519074." evidence="18">
    <original>R</original>
    <variation>W</variation>
    <location>
        <position position="171"/>
    </location>
</feature>
<feature type="mutagenesis site" description="Inhibits S-nitrosylation of Cys-117; when associated with M-120." evidence="17">
    <original>I</original>
    <variation>M</variation>
    <location>
        <position position="115"/>
    </location>
</feature>
<feature type="mutagenesis site" description="Inhibits S-nitrosylation of Cys-117; when associated with M-115." evidence="17">
    <original>E</original>
    <variation>M</variation>
    <location>
        <position position="120"/>
    </location>
</feature>
<feature type="mutagenesis site" description="Impairs phosphorylation by STK10." evidence="15">
    <original>Y</original>
    <variation>R</variation>
    <location>
        <position position="556"/>
    </location>
</feature>
<feature type="mutagenesis site" description="Abolishes phosphorylation by STK10." evidence="15">
    <original>T</original>
    <variation>A</variation>
    <location>
        <position position="558"/>
    </location>
</feature>
<feature type="mutagenesis site" description="Completely abolishes the interaction between N- and C-terminal domains." evidence="6">
    <original>T</original>
    <variation>D</variation>
    <location>
        <position position="558"/>
    </location>
</feature>
<feature type="mutagenesis site" description="Phosphomimetic mutant." evidence="15">
    <original>T</original>
    <variation>D</variation>
    <location>
        <position position="558"/>
    </location>
</feature>
<feature type="strand" evidence="32">
    <location>
        <begin position="5"/>
        <end position="10"/>
    </location>
</feature>
<feature type="strand" evidence="32">
    <location>
        <begin position="15"/>
        <end position="20"/>
    </location>
</feature>
<feature type="helix" evidence="32">
    <location>
        <begin position="26"/>
        <end position="37"/>
    </location>
</feature>
<feature type="helix" evidence="32">
    <location>
        <begin position="42"/>
        <end position="44"/>
    </location>
</feature>
<feature type="strand" evidence="32">
    <location>
        <begin position="45"/>
        <end position="51"/>
    </location>
</feature>
<feature type="strand" evidence="32">
    <location>
        <begin position="56"/>
        <end position="58"/>
    </location>
</feature>
<feature type="strand" evidence="32">
    <location>
        <begin position="63"/>
        <end position="65"/>
    </location>
</feature>
<feature type="strand" evidence="33">
    <location>
        <begin position="68"/>
        <end position="70"/>
    </location>
</feature>
<feature type="strand" evidence="32">
    <location>
        <begin position="74"/>
        <end position="82"/>
    </location>
</feature>
<feature type="helix" evidence="32">
    <location>
        <begin position="89"/>
        <end position="92"/>
    </location>
</feature>
<feature type="helix" evidence="32">
    <location>
        <begin position="96"/>
        <end position="111"/>
    </location>
</feature>
<feature type="helix" evidence="32">
    <location>
        <begin position="119"/>
        <end position="134"/>
    </location>
</feature>
<feature type="turn" evidence="32">
    <location>
        <begin position="139"/>
        <end position="141"/>
    </location>
</feature>
<feature type="turn" evidence="32">
    <location>
        <begin position="144"/>
        <end position="149"/>
    </location>
</feature>
<feature type="helix" evidence="32">
    <location>
        <begin position="155"/>
        <end position="160"/>
    </location>
</feature>
<feature type="helix" evidence="32">
    <location>
        <begin position="165"/>
        <end position="178"/>
    </location>
</feature>
<feature type="turn" evidence="32">
    <location>
        <begin position="179"/>
        <end position="181"/>
    </location>
</feature>
<feature type="helix" evidence="32">
    <location>
        <begin position="184"/>
        <end position="195"/>
    </location>
</feature>
<feature type="turn" evidence="32">
    <location>
        <begin position="199"/>
        <end position="202"/>
    </location>
</feature>
<feature type="strand" evidence="32">
    <location>
        <begin position="204"/>
        <end position="210"/>
    </location>
</feature>
<feature type="strand" evidence="32">
    <location>
        <begin position="215"/>
        <end position="221"/>
    </location>
</feature>
<feature type="strand" evidence="32">
    <location>
        <begin position="224"/>
        <end position="229"/>
    </location>
</feature>
<feature type="strand" evidence="32">
    <location>
        <begin position="233"/>
        <end position="235"/>
    </location>
</feature>
<feature type="strand" evidence="32">
    <location>
        <begin position="237"/>
        <end position="241"/>
    </location>
</feature>
<feature type="helix" evidence="32">
    <location>
        <begin position="242"/>
        <end position="244"/>
    </location>
</feature>
<feature type="strand" evidence="32">
    <location>
        <begin position="245"/>
        <end position="251"/>
    </location>
</feature>
<feature type="strand" evidence="32">
    <location>
        <begin position="254"/>
        <end position="261"/>
    </location>
</feature>
<feature type="strand" evidence="32">
    <location>
        <begin position="267"/>
        <end position="270"/>
    </location>
</feature>
<feature type="helix" evidence="32">
    <location>
        <begin position="274"/>
        <end position="295"/>
    </location>
</feature>
<feature type="helix" evidence="32">
    <location>
        <begin position="300"/>
        <end position="311"/>
    </location>
</feature>
<feature type="turn" evidence="33">
    <location>
        <begin position="334"/>
        <end position="337"/>
    </location>
</feature>
<feature type="helix" evidence="31">
    <location>
        <begin position="340"/>
        <end position="343"/>
    </location>
</feature>
<feature type="helix" evidence="30">
    <location>
        <begin position="504"/>
        <end position="507"/>
    </location>
</feature>
<feature type="helix" evidence="30">
    <location>
        <begin position="511"/>
        <end position="514"/>
    </location>
</feature>
<feature type="helix" evidence="30">
    <location>
        <begin position="516"/>
        <end position="530"/>
    </location>
</feature>
<feature type="helix" evidence="30">
    <location>
        <begin position="540"/>
        <end position="550"/>
    </location>
</feature>
<feature type="helix" evidence="30">
    <location>
        <begin position="555"/>
        <end position="562"/>
    </location>
</feature>
<feature type="helix" evidence="30">
    <location>
        <begin position="567"/>
        <end position="575"/>
    </location>
</feature>
<sequence length="577" mass="67820">MPKTISVRVTTMDAELEFAIQPNTTGKQLFDQVVKTIGLREVWFFGLQYQDTKGFSTWLKLNKKVTAQDVRKESPLLFKFRAKFYPEDVSEELIQDITQRLFFLQVKEGILNDDIYCPPETAVLLASYAVQSKYGDFNKEVHKSGYLAGDKLLPQRVLEQHKLNKDQWEERIQVWHEEHRGMLREDAVLEYLKIAQDLEMYGVNYFSIKNKKGSELWLGVDALGLNIYEQNDRLTPKIGFPWSEIRNISFNDKKFVIKPIDKKAPDFVFYAPRLRINKRILALCMGNHELYMRRRKPDTIEVQQMKAQAREEKHQKQMERAMLENEKKKREMAEKEKEKIEREKEELMERLKQIEEQTKKAQQELEEQTRRALELEQERKRAQSEAEKLAKERQEAEEAKEALLQASRDQKKTQEQLALEMAELTARISQLEMARQKKESEAVEWQQKAQMVQEDLEKTRAELKTAMSTPHVAEPAENEQDEQDENGAEASADLRADAMAKDRSEEERTTEAEKNERVQKHLKALTSELANARDESKKTANDMIHAENMRLGRDKYKTLRQIRQGNTKQRIDEFESM</sequence>
<accession>P26038</accession>
<protein>
    <recommendedName>
        <fullName evidence="24">Moesin</fullName>
    </recommendedName>
    <alternativeName>
        <fullName>Membrane-organizing extension spike protein</fullName>
    </alternativeName>
</protein>
<name>MOES_HUMAN</name>
<dbReference type="EMBL" id="M69066">
    <property type="protein sequence ID" value="AAA36322.1"/>
    <property type="molecule type" value="mRNA"/>
</dbReference>
<dbReference type="EMBL" id="Z98946">
    <property type="protein sequence ID" value="CAB46379.1"/>
    <property type="molecule type" value="Genomic_DNA"/>
</dbReference>
<dbReference type="EMBL" id="BC017293">
    <property type="protein sequence ID" value="AAH17293.1"/>
    <property type="molecule type" value="mRNA"/>
</dbReference>
<dbReference type="CCDS" id="CCDS14382.1"/>
<dbReference type="PIR" id="A41289">
    <property type="entry name" value="A41289"/>
</dbReference>
<dbReference type="RefSeq" id="NP_002435.1">
    <property type="nucleotide sequence ID" value="NM_002444.3"/>
</dbReference>
<dbReference type="PDB" id="1E5W">
    <property type="method" value="X-ray"/>
    <property type="resolution" value="2.70 A"/>
    <property type="chains" value="A=2-346"/>
</dbReference>
<dbReference type="PDB" id="1EF1">
    <property type="method" value="X-ray"/>
    <property type="resolution" value="1.90 A"/>
    <property type="chains" value="A/B=4-297, C/D=488-577"/>
</dbReference>
<dbReference type="PDB" id="1SGH">
    <property type="method" value="X-ray"/>
    <property type="resolution" value="3.50 A"/>
    <property type="chains" value="A=1-297"/>
</dbReference>
<dbReference type="PDB" id="6TXQ">
    <property type="method" value="X-ray"/>
    <property type="resolution" value="1.73 A"/>
    <property type="chains" value="AAA=1-346"/>
</dbReference>
<dbReference type="PDB" id="6TXS">
    <property type="method" value="X-ray"/>
    <property type="resolution" value="2.20 A"/>
    <property type="chains" value="AAA=1-346"/>
</dbReference>
<dbReference type="PDB" id="8CIR">
    <property type="method" value="X-ray"/>
    <property type="resolution" value="1.85 A"/>
    <property type="chains" value="A/B=1-346"/>
</dbReference>
<dbReference type="PDB" id="8CIS">
    <property type="method" value="X-ray"/>
    <property type="resolution" value="1.52 A"/>
    <property type="chains" value="A=1-346"/>
</dbReference>
<dbReference type="PDB" id="8CIT">
    <property type="method" value="X-ray"/>
    <property type="resolution" value="2.54 A"/>
    <property type="chains" value="A/B/C=1-346"/>
</dbReference>
<dbReference type="PDB" id="8CIU">
    <property type="method" value="X-ray"/>
    <property type="resolution" value="2.39 A"/>
    <property type="chains" value="A=1-346"/>
</dbReference>
<dbReference type="PDBsum" id="1E5W"/>
<dbReference type="PDBsum" id="1EF1"/>
<dbReference type="PDBsum" id="1SGH"/>
<dbReference type="PDBsum" id="6TXQ"/>
<dbReference type="PDBsum" id="6TXS"/>
<dbReference type="PDBsum" id="8CIR"/>
<dbReference type="PDBsum" id="8CIS"/>
<dbReference type="PDBsum" id="8CIT"/>
<dbReference type="PDBsum" id="8CIU"/>
<dbReference type="SMR" id="P26038"/>
<dbReference type="BioGRID" id="110584">
    <property type="interactions" value="332"/>
</dbReference>
<dbReference type="CORUM" id="P26038"/>
<dbReference type="DIP" id="DIP-33841N"/>
<dbReference type="FunCoup" id="P26038">
    <property type="interactions" value="1641"/>
</dbReference>
<dbReference type="IntAct" id="P26038">
    <property type="interactions" value="99"/>
</dbReference>
<dbReference type="MINT" id="P26038"/>
<dbReference type="STRING" id="9606.ENSP00000353408"/>
<dbReference type="ChEMBL" id="CHEMBL4295733"/>
<dbReference type="GlyGen" id="P26038">
    <property type="glycosylation" value="2 sites, 1 N-linked glycan (1 site), 1 O-linked glycan (1 site)"/>
</dbReference>
<dbReference type="iPTMnet" id="P26038"/>
<dbReference type="MetOSite" id="P26038"/>
<dbReference type="PhosphoSitePlus" id="P26038"/>
<dbReference type="SwissPalm" id="P26038"/>
<dbReference type="BioMuta" id="MSN"/>
<dbReference type="DMDM" id="127234"/>
<dbReference type="OGP" id="P26038"/>
<dbReference type="CPTAC" id="CPTAC-94"/>
<dbReference type="jPOST" id="P26038"/>
<dbReference type="MassIVE" id="P26038"/>
<dbReference type="PaxDb" id="9606-ENSP00000353408"/>
<dbReference type="PeptideAtlas" id="P26038"/>
<dbReference type="PRIDE" id="P26038"/>
<dbReference type="ProteomicsDB" id="54311"/>
<dbReference type="Pumba" id="P26038"/>
<dbReference type="TopDownProteomics" id="P26038"/>
<dbReference type="Antibodypedia" id="2774">
    <property type="antibodies" value="1024 antibodies from 42 providers"/>
</dbReference>
<dbReference type="CPTC" id="P26038">
    <property type="antibodies" value="3 antibodies"/>
</dbReference>
<dbReference type="DNASU" id="4478"/>
<dbReference type="YCharOS" id="P26038">
    <property type="antibodies" value="Tested 10 antibodies from 4 manufacturers"/>
</dbReference>
<dbReference type="Ensembl" id="ENST00000360270.7">
    <property type="protein sequence ID" value="ENSP00000353408.5"/>
    <property type="gene ID" value="ENSG00000147065.18"/>
</dbReference>
<dbReference type="GeneID" id="4478"/>
<dbReference type="KEGG" id="hsa:4478"/>
<dbReference type="MANE-Select" id="ENST00000360270.7">
    <property type="protein sequence ID" value="ENSP00000353408.5"/>
    <property type="RefSeq nucleotide sequence ID" value="NM_002444.3"/>
    <property type="RefSeq protein sequence ID" value="NP_002435.1"/>
</dbReference>
<dbReference type="AGR" id="HGNC:7373"/>
<dbReference type="CTD" id="4478"/>
<dbReference type="DisGeNET" id="4478"/>
<dbReference type="GeneCards" id="MSN"/>
<dbReference type="HGNC" id="HGNC:7373">
    <property type="gene designation" value="MSN"/>
</dbReference>
<dbReference type="HPA" id="ENSG00000147065">
    <property type="expression patterns" value="Low tissue specificity"/>
</dbReference>
<dbReference type="MalaCards" id="MSN"/>
<dbReference type="MIM" id="300988">
    <property type="type" value="phenotype"/>
</dbReference>
<dbReference type="MIM" id="309845">
    <property type="type" value="gene"/>
</dbReference>
<dbReference type="neXtProt" id="NX_P26038"/>
<dbReference type="OpenTargets" id="ENSG00000147065"/>
<dbReference type="Orphanet" id="504530">
    <property type="disease" value="Combined immunodeficiency due to Moesin deficiency"/>
</dbReference>
<dbReference type="PharmGKB" id="PA31178"/>
<dbReference type="VEuPathDB" id="HostDB:ENSG00000147065"/>
<dbReference type="eggNOG" id="KOG3529">
    <property type="taxonomic scope" value="Eukaryota"/>
</dbReference>
<dbReference type="GeneTree" id="ENSGT01090000260082"/>
<dbReference type="HOGENOM" id="CLU_003623_6_2_1"/>
<dbReference type="InParanoid" id="P26038"/>
<dbReference type="OMA" id="EAMLWQQ"/>
<dbReference type="OrthoDB" id="6018897at2759"/>
<dbReference type="PAN-GO" id="P26038">
    <property type="GO annotations" value="11 GO annotations based on evolutionary models"/>
</dbReference>
<dbReference type="PhylomeDB" id="P26038"/>
<dbReference type="TreeFam" id="TF313935"/>
<dbReference type="PathwayCommons" id="P26038"/>
<dbReference type="Reactome" id="R-HSA-437239">
    <property type="pathway name" value="Recycling pathway of L1"/>
</dbReference>
<dbReference type="Reactome" id="R-HSA-8950505">
    <property type="pathway name" value="Gene and protein expression by JAK-STAT signaling after Interleukin-12 stimulation"/>
</dbReference>
<dbReference type="Reactome" id="R-HSA-9662360">
    <property type="pathway name" value="Sensory processing of sound by inner hair cells of the cochlea"/>
</dbReference>
<dbReference type="Reactome" id="R-HSA-9662361">
    <property type="pathway name" value="Sensory processing of sound by outer hair cells of the cochlea"/>
</dbReference>
<dbReference type="Reactome" id="R-HSA-9725370">
    <property type="pathway name" value="Signaling by ALK fusions and activated point mutants"/>
</dbReference>
<dbReference type="SignaLink" id="P26038"/>
<dbReference type="SIGNOR" id="P26038"/>
<dbReference type="BioGRID-ORCS" id="4478">
    <property type="hits" value="20 hits in 780 CRISPR screens"/>
</dbReference>
<dbReference type="CD-CODE" id="FB4E32DD">
    <property type="entry name" value="Presynaptic clusters and postsynaptic densities"/>
</dbReference>
<dbReference type="ChiTaRS" id="MSN">
    <property type="organism name" value="human"/>
</dbReference>
<dbReference type="EvolutionaryTrace" id="P26038"/>
<dbReference type="GeneWiki" id="Moesin"/>
<dbReference type="GenomeRNAi" id="4478"/>
<dbReference type="Pharos" id="P26038">
    <property type="development level" value="Tbio"/>
</dbReference>
<dbReference type="PRO" id="PR:P26038"/>
<dbReference type="Proteomes" id="UP000005640">
    <property type="component" value="Chromosome X"/>
</dbReference>
<dbReference type="RNAct" id="P26038">
    <property type="molecule type" value="protein"/>
</dbReference>
<dbReference type="Bgee" id="ENSG00000147065">
    <property type="expression patterns" value="Expressed in lower lobe of lung and 212 other cell types or tissues"/>
</dbReference>
<dbReference type="ExpressionAtlas" id="P26038">
    <property type="expression patterns" value="baseline and differential"/>
</dbReference>
<dbReference type="GO" id="GO:0005912">
    <property type="term" value="C:adherens junction"/>
    <property type="evidence" value="ECO:0000318"/>
    <property type="project" value="GO_Central"/>
</dbReference>
<dbReference type="GO" id="GO:0045177">
    <property type="term" value="C:apical part of cell"/>
    <property type="evidence" value="ECO:0000314"/>
    <property type="project" value="BHF-UCL"/>
</dbReference>
<dbReference type="GO" id="GO:0016324">
    <property type="term" value="C:apical plasma membrane"/>
    <property type="evidence" value="ECO:0000314"/>
    <property type="project" value="UniProtKB"/>
</dbReference>
<dbReference type="GO" id="GO:0016323">
    <property type="term" value="C:basolateral plasma membrane"/>
    <property type="evidence" value="ECO:0007669"/>
    <property type="project" value="Ensembl"/>
</dbReference>
<dbReference type="GO" id="GO:0072562">
    <property type="term" value="C:blood microparticle"/>
    <property type="evidence" value="ECO:0007005"/>
    <property type="project" value="UniProtKB"/>
</dbReference>
<dbReference type="GO" id="GO:0071944">
    <property type="term" value="C:cell periphery"/>
    <property type="evidence" value="ECO:0000314"/>
    <property type="project" value="UniProtKB"/>
</dbReference>
<dbReference type="GO" id="GO:0009986">
    <property type="term" value="C:cell surface"/>
    <property type="evidence" value="ECO:0000314"/>
    <property type="project" value="CAFA"/>
</dbReference>
<dbReference type="GO" id="GO:0005737">
    <property type="term" value="C:cytoplasm"/>
    <property type="evidence" value="ECO:0007005"/>
    <property type="project" value="UniProtKB"/>
</dbReference>
<dbReference type="GO" id="GO:0005856">
    <property type="term" value="C:cytoskeleton"/>
    <property type="evidence" value="ECO:0000304"/>
    <property type="project" value="UniProtKB"/>
</dbReference>
<dbReference type="GO" id="GO:0005829">
    <property type="term" value="C:cytosol"/>
    <property type="evidence" value="ECO:0000304"/>
    <property type="project" value="Reactome"/>
</dbReference>
<dbReference type="GO" id="GO:0070062">
    <property type="term" value="C:extracellular exosome"/>
    <property type="evidence" value="ECO:0007005"/>
    <property type="project" value="UniProtKB"/>
</dbReference>
<dbReference type="GO" id="GO:0005615">
    <property type="term" value="C:extracellular space"/>
    <property type="evidence" value="ECO:0007005"/>
    <property type="project" value="UniProtKB"/>
</dbReference>
<dbReference type="GO" id="GO:0030175">
    <property type="term" value="C:filopodium"/>
    <property type="evidence" value="ECO:0000314"/>
    <property type="project" value="UniProtKB"/>
</dbReference>
<dbReference type="GO" id="GO:0005925">
    <property type="term" value="C:focal adhesion"/>
    <property type="evidence" value="ECO:0007005"/>
    <property type="project" value="UniProtKB"/>
</dbReference>
<dbReference type="GO" id="GO:0005902">
    <property type="term" value="C:microvillus"/>
    <property type="evidence" value="ECO:0000314"/>
    <property type="project" value="BHF-UCL"/>
</dbReference>
<dbReference type="GO" id="GO:0031528">
    <property type="term" value="C:microvillus membrane"/>
    <property type="evidence" value="ECO:0007669"/>
    <property type="project" value="UniProtKB-SubCell"/>
</dbReference>
<dbReference type="GO" id="GO:0005634">
    <property type="term" value="C:nucleus"/>
    <property type="evidence" value="ECO:0007005"/>
    <property type="project" value="UniProtKB"/>
</dbReference>
<dbReference type="GO" id="GO:0048471">
    <property type="term" value="C:perinuclear region of cytoplasm"/>
    <property type="evidence" value="ECO:0000314"/>
    <property type="project" value="UniProtKB"/>
</dbReference>
<dbReference type="GO" id="GO:0005886">
    <property type="term" value="C:plasma membrane"/>
    <property type="evidence" value="ECO:0000314"/>
    <property type="project" value="HPA"/>
</dbReference>
<dbReference type="GO" id="GO:0031143">
    <property type="term" value="C:pseudopodium"/>
    <property type="evidence" value="ECO:0000314"/>
    <property type="project" value="UniProtKB"/>
</dbReference>
<dbReference type="GO" id="GO:0001931">
    <property type="term" value="C:uropod"/>
    <property type="evidence" value="ECO:0007669"/>
    <property type="project" value="Ensembl"/>
</dbReference>
<dbReference type="GO" id="GO:0031982">
    <property type="term" value="C:vesicle"/>
    <property type="evidence" value="ECO:0007005"/>
    <property type="project" value="UniProtKB"/>
</dbReference>
<dbReference type="GO" id="GO:0003779">
    <property type="term" value="F:actin binding"/>
    <property type="evidence" value="ECO:0000318"/>
    <property type="project" value="GO_Central"/>
</dbReference>
<dbReference type="GO" id="GO:0050839">
    <property type="term" value="F:cell adhesion molecule binding"/>
    <property type="evidence" value="ECO:0000353"/>
    <property type="project" value="BHF-UCL"/>
</dbReference>
<dbReference type="GO" id="GO:0003725">
    <property type="term" value="F:double-stranded RNA binding"/>
    <property type="evidence" value="ECO:0000314"/>
    <property type="project" value="MGI"/>
</dbReference>
<dbReference type="GO" id="GO:0019899">
    <property type="term" value="F:enzyme binding"/>
    <property type="evidence" value="ECO:0000353"/>
    <property type="project" value="CAFA"/>
</dbReference>
<dbReference type="GO" id="GO:0019901">
    <property type="term" value="F:protein kinase binding"/>
    <property type="evidence" value="ECO:0000353"/>
    <property type="project" value="UniProtKB"/>
</dbReference>
<dbReference type="GO" id="GO:0005102">
    <property type="term" value="F:signaling receptor binding"/>
    <property type="evidence" value="ECO:0000353"/>
    <property type="project" value="UniProtKB"/>
</dbReference>
<dbReference type="GO" id="GO:0005200">
    <property type="term" value="F:structural constituent of cytoskeleton"/>
    <property type="evidence" value="ECO:0000304"/>
    <property type="project" value="ProtInc"/>
</dbReference>
<dbReference type="GO" id="GO:0071394">
    <property type="term" value="P:cellular response to testosterone stimulus"/>
    <property type="evidence" value="ECO:0000314"/>
    <property type="project" value="UniProtKB"/>
</dbReference>
<dbReference type="GO" id="GO:0061028">
    <property type="term" value="P:establishment of endothelial barrier"/>
    <property type="evidence" value="ECO:0000316"/>
    <property type="project" value="UniProtKB"/>
</dbReference>
<dbReference type="GO" id="GO:0045198">
    <property type="term" value="P:establishment of epithelial cell apical/basal polarity"/>
    <property type="evidence" value="ECO:0000315"/>
    <property type="project" value="UniProtKB"/>
</dbReference>
<dbReference type="GO" id="GO:0022612">
    <property type="term" value="P:gland morphogenesis"/>
    <property type="evidence" value="ECO:0000315"/>
    <property type="project" value="UniProtKB"/>
</dbReference>
<dbReference type="GO" id="GO:0001771">
    <property type="term" value="P:immunological synapse formation"/>
    <property type="evidence" value="ECO:0000314"/>
    <property type="project" value="UniProtKB"/>
</dbReference>
<dbReference type="GO" id="GO:0007159">
    <property type="term" value="P:leukocyte cell-cell adhesion"/>
    <property type="evidence" value="ECO:0000270"/>
    <property type="project" value="BHF-UCL"/>
</dbReference>
<dbReference type="GO" id="GO:0050900">
    <property type="term" value="P:leukocyte migration"/>
    <property type="evidence" value="ECO:0000270"/>
    <property type="project" value="BHF-UCL"/>
</dbReference>
<dbReference type="GO" id="GO:0022614">
    <property type="term" value="P:membrane to membrane docking"/>
    <property type="evidence" value="ECO:0000270"/>
    <property type="project" value="BHF-UCL"/>
</dbReference>
<dbReference type="GO" id="GO:2000643">
    <property type="term" value="P:positive regulation of early endosome to late endosome transport"/>
    <property type="evidence" value="ECO:0000316"/>
    <property type="project" value="UniProtKB"/>
</dbReference>
<dbReference type="GO" id="GO:0010628">
    <property type="term" value="P:positive regulation of gene expression"/>
    <property type="evidence" value="ECO:0000316"/>
    <property type="project" value="UniProtKB"/>
</dbReference>
<dbReference type="GO" id="GO:0071803">
    <property type="term" value="P:positive regulation of podosome assembly"/>
    <property type="evidence" value="ECO:0007669"/>
    <property type="project" value="Ensembl"/>
</dbReference>
<dbReference type="GO" id="GO:0045732">
    <property type="term" value="P:positive regulation of protein catabolic process"/>
    <property type="evidence" value="ECO:0000316"/>
    <property type="project" value="UniProtKB"/>
</dbReference>
<dbReference type="GO" id="GO:1902966">
    <property type="term" value="P:positive regulation of protein localization to early endosome"/>
    <property type="evidence" value="ECO:0000316"/>
    <property type="project" value="UniProtKB"/>
</dbReference>
<dbReference type="GO" id="GO:0008360">
    <property type="term" value="P:regulation of cell shape"/>
    <property type="evidence" value="ECO:0000315"/>
    <property type="project" value="UniProtKB"/>
</dbReference>
<dbReference type="GO" id="GO:0008361">
    <property type="term" value="P:regulation of cell size"/>
    <property type="evidence" value="ECO:0000315"/>
    <property type="project" value="UniProtKB"/>
</dbReference>
<dbReference type="GO" id="GO:2000401">
    <property type="term" value="P:regulation of lymphocyte migration"/>
    <property type="evidence" value="ECO:0000315"/>
    <property type="project" value="UniProtKB"/>
</dbReference>
<dbReference type="GO" id="GO:1902115">
    <property type="term" value="P:regulation of organelle assembly"/>
    <property type="evidence" value="ECO:0000316"/>
    <property type="project" value="UniProtKB"/>
</dbReference>
<dbReference type="GO" id="GO:0070489">
    <property type="term" value="P:T cell aggregation"/>
    <property type="evidence" value="ECO:0000314"/>
    <property type="project" value="UniProtKB"/>
</dbReference>
<dbReference type="GO" id="GO:0072678">
    <property type="term" value="P:T cell migration"/>
    <property type="evidence" value="ECO:0000314"/>
    <property type="project" value="UniProtKB"/>
</dbReference>
<dbReference type="GO" id="GO:0042098">
    <property type="term" value="P:T cell proliferation"/>
    <property type="evidence" value="ECO:0000314"/>
    <property type="project" value="UniProtKB"/>
</dbReference>
<dbReference type="CDD" id="cd14473">
    <property type="entry name" value="FERM_B-lobe"/>
    <property type="match status" value="1"/>
</dbReference>
<dbReference type="CDD" id="cd13194">
    <property type="entry name" value="FERM_C_ERM"/>
    <property type="match status" value="1"/>
</dbReference>
<dbReference type="CDD" id="cd17187">
    <property type="entry name" value="FERM_F1_ERM"/>
    <property type="match status" value="1"/>
</dbReference>
<dbReference type="FunFam" id="2.30.29.30:FF:000003">
    <property type="entry name" value="Radixin isoform 1"/>
    <property type="match status" value="1"/>
</dbReference>
<dbReference type="FunFam" id="1.20.80.10:FF:000002">
    <property type="entry name" value="radixin isoform X1"/>
    <property type="match status" value="1"/>
</dbReference>
<dbReference type="FunFam" id="3.10.20.90:FF:000013">
    <property type="entry name" value="radixin isoform X1"/>
    <property type="match status" value="1"/>
</dbReference>
<dbReference type="FunFam" id="1.20.5.450:FF:000001">
    <property type="entry name" value="radixin isoform X2"/>
    <property type="match status" value="1"/>
</dbReference>
<dbReference type="Gene3D" id="1.20.5.450">
    <property type="match status" value="1"/>
</dbReference>
<dbReference type="Gene3D" id="1.20.80.10">
    <property type="match status" value="1"/>
</dbReference>
<dbReference type="Gene3D" id="6.10.360.10">
    <property type="match status" value="1"/>
</dbReference>
<dbReference type="Gene3D" id="3.10.20.90">
    <property type="entry name" value="Phosphatidylinositol 3-kinase Catalytic Subunit, Chain A, domain 1"/>
    <property type="match status" value="1"/>
</dbReference>
<dbReference type="Gene3D" id="2.30.29.30">
    <property type="entry name" value="Pleckstrin-homology domain (PH domain)/Phosphotyrosine-binding domain (PTB)"/>
    <property type="match status" value="1"/>
</dbReference>
<dbReference type="IDEAL" id="IID00344"/>
<dbReference type="InterPro" id="IPR019749">
    <property type="entry name" value="Band_41_domain"/>
</dbReference>
<dbReference type="InterPro" id="IPR011174">
    <property type="entry name" value="ERM"/>
</dbReference>
<dbReference type="InterPro" id="IPR011259">
    <property type="entry name" value="ERM_C_dom"/>
</dbReference>
<dbReference type="InterPro" id="IPR041789">
    <property type="entry name" value="ERM_FERM_C"/>
</dbReference>
<dbReference type="InterPro" id="IPR046810">
    <property type="entry name" value="ERM_helical"/>
</dbReference>
<dbReference type="InterPro" id="IPR000798">
    <property type="entry name" value="Ez/rad/moesin-like"/>
</dbReference>
<dbReference type="InterPro" id="IPR014352">
    <property type="entry name" value="FERM/acyl-CoA-bd_prot_sf"/>
</dbReference>
<dbReference type="InterPro" id="IPR035963">
    <property type="entry name" value="FERM_2"/>
</dbReference>
<dbReference type="InterPro" id="IPR019748">
    <property type="entry name" value="FERM_central"/>
</dbReference>
<dbReference type="InterPro" id="IPR019747">
    <property type="entry name" value="FERM_CS"/>
</dbReference>
<dbReference type="InterPro" id="IPR000299">
    <property type="entry name" value="FERM_domain"/>
</dbReference>
<dbReference type="InterPro" id="IPR018979">
    <property type="entry name" value="FERM_N"/>
</dbReference>
<dbReference type="InterPro" id="IPR018980">
    <property type="entry name" value="FERM_PH-like_C"/>
</dbReference>
<dbReference type="InterPro" id="IPR008954">
    <property type="entry name" value="Moesin_tail_sf"/>
</dbReference>
<dbReference type="InterPro" id="IPR011993">
    <property type="entry name" value="PH-like_dom_sf"/>
</dbReference>
<dbReference type="InterPro" id="IPR029071">
    <property type="entry name" value="Ubiquitin-like_domsf"/>
</dbReference>
<dbReference type="PANTHER" id="PTHR23281">
    <property type="entry name" value="MERLIN/MOESIN/EZRIN/RADIXIN"/>
    <property type="match status" value="1"/>
</dbReference>
<dbReference type="Pfam" id="PF00769">
    <property type="entry name" value="ERM_C"/>
    <property type="match status" value="1"/>
</dbReference>
<dbReference type="Pfam" id="PF20492">
    <property type="entry name" value="ERM_helical"/>
    <property type="match status" value="1"/>
</dbReference>
<dbReference type="Pfam" id="PF09380">
    <property type="entry name" value="FERM_C"/>
    <property type="match status" value="1"/>
</dbReference>
<dbReference type="Pfam" id="PF00373">
    <property type="entry name" value="FERM_M"/>
    <property type="match status" value="1"/>
</dbReference>
<dbReference type="Pfam" id="PF09379">
    <property type="entry name" value="FERM_N"/>
    <property type="match status" value="1"/>
</dbReference>
<dbReference type="PIRSF" id="PIRSF002305">
    <property type="entry name" value="ERM"/>
    <property type="match status" value="1"/>
</dbReference>
<dbReference type="PRINTS" id="PR00935">
    <property type="entry name" value="BAND41"/>
</dbReference>
<dbReference type="PRINTS" id="PR00661">
    <property type="entry name" value="ERMFAMILY"/>
</dbReference>
<dbReference type="SMART" id="SM00295">
    <property type="entry name" value="B41"/>
    <property type="match status" value="1"/>
</dbReference>
<dbReference type="SMART" id="SM01196">
    <property type="entry name" value="FERM_C"/>
    <property type="match status" value="1"/>
</dbReference>
<dbReference type="SUPFAM" id="SSF48678">
    <property type="entry name" value="Moesin tail domain"/>
    <property type="match status" value="1"/>
</dbReference>
<dbReference type="SUPFAM" id="SSF50729">
    <property type="entry name" value="PH domain-like"/>
    <property type="match status" value="1"/>
</dbReference>
<dbReference type="SUPFAM" id="SSF47031">
    <property type="entry name" value="Second domain of FERM"/>
    <property type="match status" value="1"/>
</dbReference>
<dbReference type="SUPFAM" id="SSF54236">
    <property type="entry name" value="Ubiquitin-like"/>
    <property type="match status" value="1"/>
</dbReference>
<dbReference type="PROSITE" id="PS00660">
    <property type="entry name" value="FERM_1"/>
    <property type="match status" value="1"/>
</dbReference>
<dbReference type="PROSITE" id="PS00661">
    <property type="entry name" value="FERM_2"/>
    <property type="match status" value="1"/>
</dbReference>
<dbReference type="PROSITE" id="PS50057">
    <property type="entry name" value="FERM_3"/>
    <property type="match status" value="1"/>
</dbReference>
<organism>
    <name type="scientific">Homo sapiens</name>
    <name type="common">Human</name>
    <dbReference type="NCBI Taxonomy" id="9606"/>
    <lineage>
        <taxon>Eukaryota</taxon>
        <taxon>Metazoa</taxon>
        <taxon>Chordata</taxon>
        <taxon>Craniata</taxon>
        <taxon>Vertebrata</taxon>
        <taxon>Euteleostomi</taxon>
        <taxon>Mammalia</taxon>
        <taxon>Eutheria</taxon>
        <taxon>Euarchontoglires</taxon>
        <taxon>Primates</taxon>
        <taxon>Haplorrhini</taxon>
        <taxon>Catarrhini</taxon>
        <taxon>Hominidae</taxon>
        <taxon>Homo</taxon>
    </lineage>
</organism>
<reference key="1">
    <citation type="journal article" date="1991" name="Proc. Natl. Acad. Sci. U.S.A.">
        <title>Moesin: a member of the protein 4.1-talin-ezrin family of proteins.</title>
        <authorList>
            <person name="Lankes W.T."/>
            <person name="Furthmayr H."/>
        </authorList>
    </citation>
    <scope>NUCLEOTIDE SEQUENCE [MRNA]</scope>
    <scope>PROTEIN SEQUENCE OF 2-16; 54-60 AND 414-435</scope>
    <source>
        <tissue>Placenta</tissue>
    </source>
</reference>
<reference key="2">
    <citation type="journal article" date="2005" name="Nature">
        <title>The DNA sequence of the human X chromosome.</title>
        <authorList>
            <person name="Ross M.T."/>
            <person name="Grafham D.V."/>
            <person name="Coffey A.J."/>
            <person name="Scherer S."/>
            <person name="McLay K."/>
            <person name="Muzny D."/>
            <person name="Platzer M."/>
            <person name="Howell G.R."/>
            <person name="Burrows C."/>
            <person name="Bird C.P."/>
            <person name="Frankish A."/>
            <person name="Lovell F.L."/>
            <person name="Howe K.L."/>
            <person name="Ashurst J.L."/>
            <person name="Fulton R.S."/>
            <person name="Sudbrak R."/>
            <person name="Wen G."/>
            <person name="Jones M.C."/>
            <person name="Hurles M.E."/>
            <person name="Andrews T.D."/>
            <person name="Scott C.E."/>
            <person name="Searle S."/>
            <person name="Ramser J."/>
            <person name="Whittaker A."/>
            <person name="Deadman R."/>
            <person name="Carter N.P."/>
            <person name="Hunt S.E."/>
            <person name="Chen R."/>
            <person name="Cree A."/>
            <person name="Gunaratne P."/>
            <person name="Havlak P."/>
            <person name="Hodgson A."/>
            <person name="Metzker M.L."/>
            <person name="Richards S."/>
            <person name="Scott G."/>
            <person name="Steffen D."/>
            <person name="Sodergren E."/>
            <person name="Wheeler D.A."/>
            <person name="Worley K.C."/>
            <person name="Ainscough R."/>
            <person name="Ambrose K.D."/>
            <person name="Ansari-Lari M.A."/>
            <person name="Aradhya S."/>
            <person name="Ashwell R.I."/>
            <person name="Babbage A.K."/>
            <person name="Bagguley C.L."/>
            <person name="Ballabio A."/>
            <person name="Banerjee R."/>
            <person name="Barker G.E."/>
            <person name="Barlow K.F."/>
            <person name="Barrett I.P."/>
            <person name="Bates K.N."/>
            <person name="Beare D.M."/>
            <person name="Beasley H."/>
            <person name="Beasley O."/>
            <person name="Beck A."/>
            <person name="Bethel G."/>
            <person name="Blechschmidt K."/>
            <person name="Brady N."/>
            <person name="Bray-Allen S."/>
            <person name="Bridgeman A.M."/>
            <person name="Brown A.J."/>
            <person name="Brown M.J."/>
            <person name="Bonnin D."/>
            <person name="Bruford E.A."/>
            <person name="Buhay C."/>
            <person name="Burch P."/>
            <person name="Burford D."/>
            <person name="Burgess J."/>
            <person name="Burrill W."/>
            <person name="Burton J."/>
            <person name="Bye J.M."/>
            <person name="Carder C."/>
            <person name="Carrel L."/>
            <person name="Chako J."/>
            <person name="Chapman J.C."/>
            <person name="Chavez D."/>
            <person name="Chen E."/>
            <person name="Chen G."/>
            <person name="Chen Y."/>
            <person name="Chen Z."/>
            <person name="Chinault C."/>
            <person name="Ciccodicola A."/>
            <person name="Clark S.Y."/>
            <person name="Clarke G."/>
            <person name="Clee C.M."/>
            <person name="Clegg S."/>
            <person name="Clerc-Blankenburg K."/>
            <person name="Clifford K."/>
            <person name="Cobley V."/>
            <person name="Cole C.G."/>
            <person name="Conquer J.S."/>
            <person name="Corby N."/>
            <person name="Connor R.E."/>
            <person name="David R."/>
            <person name="Davies J."/>
            <person name="Davis C."/>
            <person name="Davis J."/>
            <person name="Delgado O."/>
            <person name="Deshazo D."/>
            <person name="Dhami P."/>
            <person name="Ding Y."/>
            <person name="Dinh H."/>
            <person name="Dodsworth S."/>
            <person name="Draper H."/>
            <person name="Dugan-Rocha S."/>
            <person name="Dunham A."/>
            <person name="Dunn M."/>
            <person name="Durbin K.J."/>
            <person name="Dutta I."/>
            <person name="Eades T."/>
            <person name="Ellwood M."/>
            <person name="Emery-Cohen A."/>
            <person name="Errington H."/>
            <person name="Evans K.L."/>
            <person name="Faulkner L."/>
            <person name="Francis F."/>
            <person name="Frankland J."/>
            <person name="Fraser A.E."/>
            <person name="Galgoczy P."/>
            <person name="Gilbert J."/>
            <person name="Gill R."/>
            <person name="Gloeckner G."/>
            <person name="Gregory S.G."/>
            <person name="Gribble S."/>
            <person name="Griffiths C."/>
            <person name="Grocock R."/>
            <person name="Gu Y."/>
            <person name="Gwilliam R."/>
            <person name="Hamilton C."/>
            <person name="Hart E.A."/>
            <person name="Hawes A."/>
            <person name="Heath P.D."/>
            <person name="Heitmann K."/>
            <person name="Hennig S."/>
            <person name="Hernandez J."/>
            <person name="Hinzmann B."/>
            <person name="Ho S."/>
            <person name="Hoffs M."/>
            <person name="Howden P.J."/>
            <person name="Huckle E.J."/>
            <person name="Hume J."/>
            <person name="Hunt P.J."/>
            <person name="Hunt A.R."/>
            <person name="Isherwood J."/>
            <person name="Jacob L."/>
            <person name="Johnson D."/>
            <person name="Jones S."/>
            <person name="de Jong P.J."/>
            <person name="Joseph S.S."/>
            <person name="Keenan S."/>
            <person name="Kelly S."/>
            <person name="Kershaw J.K."/>
            <person name="Khan Z."/>
            <person name="Kioschis P."/>
            <person name="Klages S."/>
            <person name="Knights A.J."/>
            <person name="Kosiura A."/>
            <person name="Kovar-Smith C."/>
            <person name="Laird G.K."/>
            <person name="Langford C."/>
            <person name="Lawlor S."/>
            <person name="Leversha M."/>
            <person name="Lewis L."/>
            <person name="Liu W."/>
            <person name="Lloyd C."/>
            <person name="Lloyd D.M."/>
            <person name="Loulseged H."/>
            <person name="Loveland J.E."/>
            <person name="Lovell J.D."/>
            <person name="Lozado R."/>
            <person name="Lu J."/>
            <person name="Lyne R."/>
            <person name="Ma J."/>
            <person name="Maheshwari M."/>
            <person name="Matthews L.H."/>
            <person name="McDowall J."/>
            <person name="McLaren S."/>
            <person name="McMurray A."/>
            <person name="Meidl P."/>
            <person name="Meitinger T."/>
            <person name="Milne S."/>
            <person name="Miner G."/>
            <person name="Mistry S.L."/>
            <person name="Morgan M."/>
            <person name="Morris S."/>
            <person name="Mueller I."/>
            <person name="Mullikin J.C."/>
            <person name="Nguyen N."/>
            <person name="Nordsiek G."/>
            <person name="Nyakatura G."/>
            <person name="O'dell C.N."/>
            <person name="Okwuonu G."/>
            <person name="Palmer S."/>
            <person name="Pandian R."/>
            <person name="Parker D."/>
            <person name="Parrish J."/>
            <person name="Pasternak S."/>
            <person name="Patel D."/>
            <person name="Pearce A.V."/>
            <person name="Pearson D.M."/>
            <person name="Pelan S.E."/>
            <person name="Perez L."/>
            <person name="Porter K.M."/>
            <person name="Ramsey Y."/>
            <person name="Reichwald K."/>
            <person name="Rhodes S."/>
            <person name="Ridler K.A."/>
            <person name="Schlessinger D."/>
            <person name="Schueler M.G."/>
            <person name="Sehra H.K."/>
            <person name="Shaw-Smith C."/>
            <person name="Shen H."/>
            <person name="Sheridan E.M."/>
            <person name="Shownkeen R."/>
            <person name="Skuce C.D."/>
            <person name="Smith M.L."/>
            <person name="Sotheran E.C."/>
            <person name="Steingruber H.E."/>
            <person name="Steward C.A."/>
            <person name="Storey R."/>
            <person name="Swann R.M."/>
            <person name="Swarbreck D."/>
            <person name="Tabor P.E."/>
            <person name="Taudien S."/>
            <person name="Taylor T."/>
            <person name="Teague B."/>
            <person name="Thomas K."/>
            <person name="Thorpe A."/>
            <person name="Timms K."/>
            <person name="Tracey A."/>
            <person name="Trevanion S."/>
            <person name="Tromans A.C."/>
            <person name="d'Urso M."/>
            <person name="Verduzco D."/>
            <person name="Villasana D."/>
            <person name="Waldron L."/>
            <person name="Wall M."/>
            <person name="Wang Q."/>
            <person name="Warren J."/>
            <person name="Warry G.L."/>
            <person name="Wei X."/>
            <person name="West A."/>
            <person name="Whitehead S.L."/>
            <person name="Whiteley M.N."/>
            <person name="Wilkinson J.E."/>
            <person name="Willey D.L."/>
            <person name="Williams G."/>
            <person name="Williams L."/>
            <person name="Williamson A."/>
            <person name="Williamson H."/>
            <person name="Wilming L."/>
            <person name="Woodmansey R.L."/>
            <person name="Wray P.W."/>
            <person name="Yen J."/>
            <person name="Zhang J."/>
            <person name="Zhou J."/>
            <person name="Zoghbi H."/>
            <person name="Zorilla S."/>
            <person name="Buck D."/>
            <person name="Reinhardt R."/>
            <person name="Poustka A."/>
            <person name="Rosenthal A."/>
            <person name="Lehrach H."/>
            <person name="Meindl A."/>
            <person name="Minx P.J."/>
            <person name="Hillier L.W."/>
            <person name="Willard H.F."/>
            <person name="Wilson R.K."/>
            <person name="Waterston R.H."/>
            <person name="Rice C.M."/>
            <person name="Vaudin M."/>
            <person name="Coulson A."/>
            <person name="Nelson D.L."/>
            <person name="Weinstock G."/>
            <person name="Sulston J.E."/>
            <person name="Durbin R.M."/>
            <person name="Hubbard T."/>
            <person name="Gibbs R.A."/>
            <person name="Beck S."/>
            <person name="Rogers J."/>
            <person name="Bentley D.R."/>
        </authorList>
    </citation>
    <scope>NUCLEOTIDE SEQUENCE [LARGE SCALE GENOMIC DNA]</scope>
</reference>
<reference key="3">
    <citation type="journal article" date="2004" name="Genome Res.">
        <title>The status, quality, and expansion of the NIH full-length cDNA project: the Mammalian Gene Collection (MGC).</title>
        <authorList>
            <consortium name="The MGC Project Team"/>
        </authorList>
    </citation>
    <scope>NUCLEOTIDE SEQUENCE [LARGE SCALE MRNA]</scope>
    <source>
        <tissue>Pancreas</tissue>
    </source>
</reference>
<reference key="4">
    <citation type="journal article" date="2003" name="Nat. Biotechnol.">
        <title>Exploring proteomes and analyzing protein processing by mass spectrometric identification of sorted N-terminal peptides.</title>
        <authorList>
            <person name="Gevaert K."/>
            <person name="Goethals M."/>
            <person name="Martens L."/>
            <person name="Van Damme J."/>
            <person name="Staes A."/>
            <person name="Thomas G.R."/>
            <person name="Vandekerckhove J."/>
        </authorList>
    </citation>
    <scope>PROTEIN SEQUENCE OF 2-8</scope>
    <source>
        <tissue>Platelet</tissue>
    </source>
</reference>
<reference key="5">
    <citation type="journal article" date="1995" name="J. Virol.">
        <title>Physical association of moesin and CD46 as a receptor complex for measles virus.</title>
        <authorList>
            <person name="Schneider-Schaulies J."/>
            <person name="Dunster L.M."/>
            <person name="Schwartz-Albiez R."/>
            <person name="Krohne G."/>
            <person name="ter Meulen V."/>
        </authorList>
    </citation>
    <scope>INTERACTION WITH CD46</scope>
    <scope>SUBCELLULAR LOCATION</scope>
</reference>
<reference key="6">
    <citation type="journal article" date="1997" name="J. Cell Biol.">
        <title>Identification of EBP50: a PDZ-containing phosphoprotein that associates with members of the ezrin-radixin-moesin family.</title>
        <authorList>
            <person name="Reczek D."/>
            <person name="Berryman M."/>
            <person name="Bretscher A."/>
        </authorList>
    </citation>
    <scope>INTERACTION WITH NHERF1</scope>
</reference>
<reference key="7">
    <citation type="journal article" date="1997" name="Virus Res.">
        <title>Specific binding of HIV-1 envelope protein gp120 to the structural membrane proteins ezrin and moesin.</title>
        <authorList>
            <person name="Hecker C."/>
            <person name="Weise C."/>
            <person name="Schneider-Schaulies J."/>
            <person name="Holmes H.C."/>
            <person name="ter Meulen V."/>
        </authorList>
    </citation>
    <scope>INTERACTION WITH HIV-1 ENVELOPE PROTEIN GP120</scope>
</reference>
<reference key="8">
    <citation type="journal article" date="1997" name="J. Cell Biol.">
        <title>Moesin interacts with the cytoplasmic region of intercellular adhesion molecule-3 and is redistributed to the uropod of T lymphocytes during cell polarization.</title>
        <authorList>
            <person name="Serrador J.M."/>
            <person name="Alonso-Lebrero J.L."/>
            <person name="del Pozo M.A."/>
            <person name="Furthmayr H."/>
            <person name="Schwartz-Albiez R."/>
            <person name="Calvo J."/>
            <person name="Lozano F."/>
            <person name="Sanchez-Madrid F."/>
        </authorList>
    </citation>
    <scope>FUNCTION</scope>
    <scope>INTERACTION WITH ICAM3 AND CD44</scope>
    <scope>SUBCELLULAR LOCATION</scope>
</reference>
<reference key="9">
    <citation type="journal article" date="1998" name="Blood">
        <title>CD43 interacts with moesin and ezrin and regulates its redistribution to the uropods of T lymphocytes at the cell-cell contacts.</title>
        <authorList>
            <person name="Serrador J.M."/>
            <person name="Nieto M."/>
            <person name="Alonso-Lebrero J.L."/>
            <person name="del Pozo M.A."/>
            <person name="Calvo J."/>
            <person name="Furthmayr H."/>
            <person name="Schwartz-Albiez R."/>
            <person name="Lozano F."/>
            <person name="Gonzalez-Amaro R."/>
            <person name="Sanchez-Mateos P."/>
            <person name="Sanchez-Madrid F."/>
        </authorList>
    </citation>
    <scope>FUNCTION</scope>
    <scope>INTERACTION WITH SPN/CD43 CYTOPLASMIC TAIL</scope>
</reference>
<reference key="10">
    <citation type="journal article" date="1999" name="J. Biol. Chem.">
        <title>Replacement of threonine 558, a critical site of phosphorylation of moesin in vivo, with aspartate activates F-actin binding of moesin. Regulation by conformational change.</title>
        <authorList>
            <person name="Huang L."/>
            <person name="Wong T.Y."/>
            <person name="Lin R.C."/>
            <person name="Furthmayr H."/>
        </authorList>
    </citation>
    <scope>FUNCTION</scope>
    <scope>MUTAGENESIS OF THR-558</scope>
    <scope>INTERACTION WITH F-ACTIN</scope>
</reference>
<reference key="11">
    <citation type="journal article" date="2001" name="Immunity">
        <title>Exclusion of CD43 from the immunological synapse is mediated by phosphorylation-regulated relocation of the cytoskeletal adaptor moesin.</title>
        <authorList>
            <person name="Delon J."/>
            <person name="Kaibuchi K."/>
            <person name="Germain R.N."/>
        </authorList>
    </citation>
    <scope>FUNCTION</scope>
    <scope>INTERACTION WITH SPN/CD43 CYTOPLASMIC TAIL</scope>
    <scope>SUBCELLULAR LOCATION</scope>
</reference>
<reference key="12">
    <citation type="journal article" date="2002" name="Immunity">
        <title>ITAM-based interaction of ERM proteins with Syk mediates signaling by the leukocyte adhesion receptor PSGL-1.</title>
        <authorList>
            <person name="Urzainqui A."/>
            <person name="Serrador J.M."/>
            <person name="Viedma F."/>
            <person name="Yanez-Mo M."/>
            <person name="Rodriguez A."/>
            <person name="Corbi A.L."/>
            <person name="Alonso-Lebrero J.L."/>
            <person name="Luque A."/>
            <person name="Deckert M."/>
            <person name="Vazquez J."/>
            <person name="Sanchez-Madrid F."/>
        </authorList>
    </citation>
    <scope>INTERACTION WITH SELPLG AND SYK</scope>
    <scope>FUNCTION</scope>
</reference>
<reference key="13">
    <citation type="journal article" date="2004" name="Infect. Immun.">
        <title>Role for moesin in lipopolysaccharide-stimulated signal transduction.</title>
        <authorList>
            <person name="Iontcheva I."/>
            <person name="Amar S."/>
            <person name="Zawawi K.H."/>
            <person name="Kantarci A."/>
            <person name="Van Dyke T.E."/>
        </authorList>
    </citation>
    <scope>FUNCTION</scope>
    <scope>SUBCELLULAR LOCATION</scope>
</reference>
<reference key="14">
    <citation type="journal article" date="2006" name="J. Cell Sci.">
        <title>Podoplanin binds ERM proteins to activate RhoA and promote epithelial-mesenchymal transition.</title>
        <authorList>
            <person name="Martin-Villar E."/>
            <person name="Megias D."/>
            <person name="Castel S."/>
            <person name="Yurrita M.M."/>
            <person name="Vilaro S."/>
            <person name="Quintanilla M."/>
        </authorList>
    </citation>
    <scope>INTERACTION WITH PDPN</scope>
</reference>
<reference key="15">
    <citation type="journal article" date="2008" name="Am. J. Physiol.">
        <title>TIMAP is a positive regulator of pulmonary endothelial barrier function.</title>
        <authorList>
            <person name="Csortos C."/>
            <person name="Czikora I."/>
            <person name="Bogatcheva N.V."/>
            <person name="Adyshev D.M."/>
            <person name="Poirier C."/>
            <person name="Olah G."/>
            <person name="Verin A.D."/>
        </authorList>
    </citation>
    <scope>SUBCELLULAR LOCATION</scope>
    <scope>INTERACTION WITH PPP1R16B</scope>
</reference>
<reference key="16">
    <citation type="journal article" date="2008" name="Proc. Natl. Acad. Sci. U.S.A.">
        <title>A quantitative atlas of mitotic phosphorylation.</title>
        <authorList>
            <person name="Dephoure N."/>
            <person name="Zhou C."/>
            <person name="Villen J."/>
            <person name="Beausoleil S.A."/>
            <person name="Bakalarski C.E."/>
            <person name="Elledge S.J."/>
            <person name="Gygi S.P."/>
        </authorList>
    </citation>
    <scope>IDENTIFICATION BY MASS SPECTROMETRY [LARGE SCALE ANALYSIS]</scope>
    <source>
        <tissue>Cervix carcinoma</tissue>
    </source>
</reference>
<reference key="17">
    <citation type="journal article" date="2009" name="Proc. Natl. Acad. Sci. U.S.A.">
        <title>LOK is a major ERM kinase in resting lymphocytes and regulates cytoskeletal rearrangement through ERM phosphorylation.</title>
        <authorList>
            <person name="Belkina N.V."/>
            <person name="Liu Y."/>
            <person name="Hao J.J."/>
            <person name="Karasuyama H."/>
            <person name="Shaw S."/>
        </authorList>
    </citation>
    <scope>PHOSPHORYLATION AT THR-558</scope>
    <scope>MUTAGENESIS OF TYR-556 AND THR-558</scope>
</reference>
<reference key="18">
    <citation type="journal article" date="2009" name="Sci. Signal.">
        <title>Quantitative phosphoproteomic analysis of T cell receptor signaling reveals system-wide modulation of protein-protein interactions.</title>
        <authorList>
            <person name="Mayya V."/>
            <person name="Lundgren D.H."/>
            <person name="Hwang S.-I."/>
            <person name="Rezaul K."/>
            <person name="Wu L."/>
            <person name="Eng J.K."/>
            <person name="Rodionov V."/>
            <person name="Han D.K."/>
        </authorList>
    </citation>
    <scope>PHOSPHORYLATION [LARGE SCALE ANALYSIS] AT TYR-116</scope>
    <scope>IDENTIFICATION BY MASS SPECTROMETRY [LARGE SCALE ANALYSIS]</scope>
    <source>
        <tissue>Leukemic T-cell</tissue>
    </source>
</reference>
<reference key="19">
    <citation type="journal article" date="2009" name="Science">
        <title>Lysine acetylation targets protein complexes and co-regulates major cellular functions.</title>
        <authorList>
            <person name="Choudhary C."/>
            <person name="Kumar C."/>
            <person name="Gnad F."/>
            <person name="Nielsen M.L."/>
            <person name="Rehman M."/>
            <person name="Walther T.C."/>
            <person name="Olsen J.V."/>
            <person name="Mann M."/>
        </authorList>
    </citation>
    <scope>ACETYLATION [LARGE SCALE ANALYSIS] AT LYS-79 AND LYS-139</scope>
    <scope>IDENTIFICATION BY MASS SPECTROMETRY [LARGE SCALE ANALYSIS]</scope>
</reference>
<reference key="20">
    <citation type="journal article" date="2011" name="BMC Syst. Biol.">
        <title>Initial characterization of the human central proteome.</title>
        <authorList>
            <person name="Burkard T.R."/>
            <person name="Planyavsky M."/>
            <person name="Kaupe I."/>
            <person name="Breitwieser F.P."/>
            <person name="Buerckstuemmer T."/>
            <person name="Bennett K.L."/>
            <person name="Superti-Furga G."/>
            <person name="Colinge J."/>
        </authorList>
    </citation>
    <scope>IDENTIFICATION BY MASS SPECTROMETRY [LARGE SCALE ANALYSIS]</scope>
</reference>
<reference key="21">
    <citation type="journal article" date="2011" name="Virology">
        <title>PDZD8 is a novel moesin-interacting cytoskeletal regulatory protein that suppresses infection by herpes simplex virus type 1.</title>
        <authorList>
            <person name="Henning M.S."/>
            <person name="Stiedl P."/>
            <person name="Barry D.S."/>
            <person name="McMahon R."/>
            <person name="Morham S.G."/>
            <person name="Walsh D."/>
            <person name="Naghavi M.H."/>
        </authorList>
    </citation>
    <scope>FUNCTION</scope>
    <scope>INTERACTION WITH PDZD8</scope>
</reference>
<reference key="22">
    <citation type="journal article" date="2012" name="Proc. Natl. Acad. Sci. U.S.A.">
        <title>N-terminal acetylome analyses and functional insights of the N-terminal acetyltransferase NatB.</title>
        <authorList>
            <person name="Van Damme P."/>
            <person name="Lasa M."/>
            <person name="Polevoda B."/>
            <person name="Gazquez C."/>
            <person name="Elosegui-Artola A."/>
            <person name="Kim D.S."/>
            <person name="De Juan-Pardo E."/>
            <person name="Demeyer K."/>
            <person name="Hole K."/>
            <person name="Larrea E."/>
            <person name="Timmerman E."/>
            <person name="Prieto J."/>
            <person name="Arnesen T."/>
            <person name="Sherman F."/>
            <person name="Gevaert K."/>
            <person name="Aldabe R."/>
        </authorList>
    </citation>
    <scope>IDENTIFICATION BY MASS SPECTROMETRY [LARGE SCALE ANALYSIS]</scope>
</reference>
<reference key="23">
    <citation type="journal article" date="2013" name="J. Proteome Res.">
        <title>Toward a comprehensive characterization of a human cancer cell phosphoproteome.</title>
        <authorList>
            <person name="Zhou H."/>
            <person name="Di Palma S."/>
            <person name="Preisinger C."/>
            <person name="Peng M."/>
            <person name="Polat A.N."/>
            <person name="Heck A.J."/>
            <person name="Mohammed S."/>
        </authorList>
    </citation>
    <scope>PHOSPHORYLATION [LARGE SCALE ANALYSIS] AT SER-74; SER-407 AND SER-527</scope>
    <scope>IDENTIFICATION BY MASS SPECTROMETRY [LARGE SCALE ANALYSIS]</scope>
    <source>
        <tissue>Cervix carcinoma</tissue>
        <tissue>Erythroleukemia</tissue>
    </source>
</reference>
<reference key="24">
    <citation type="journal article" date="2014" name="Cell">
        <title>Target-selective protein S-nitrosylation by sequence motif recognition.</title>
        <authorList>
            <person name="Jia J."/>
            <person name="Arif A."/>
            <person name="Terenzi F."/>
            <person name="Willard B."/>
            <person name="Plow E.F."/>
            <person name="Hazen S.L."/>
            <person name="Fox P.L."/>
        </authorList>
    </citation>
    <scope>S-NITROSYLATION AT CYS-117</scope>
    <scope>MUTAGENESIS OF ILE-115 AND GLU-120</scope>
    <scope>DOMAIN</scope>
</reference>
<reference key="25">
    <citation type="journal article" date="2014" name="J. Proteomics">
        <title>An enzyme assisted RP-RPLC approach for in-depth analysis of human liver phosphoproteome.</title>
        <authorList>
            <person name="Bian Y."/>
            <person name="Song C."/>
            <person name="Cheng K."/>
            <person name="Dong M."/>
            <person name="Wang F."/>
            <person name="Huang J."/>
            <person name="Sun D."/>
            <person name="Wang L."/>
            <person name="Ye M."/>
            <person name="Zou H."/>
        </authorList>
    </citation>
    <scope>IDENTIFICATION BY MASS SPECTROMETRY [LARGE SCALE ANALYSIS]</scope>
    <source>
        <tissue>Liver</tissue>
    </source>
</reference>
<reference key="26">
    <citation type="journal article" date="2015" name="Proteomics">
        <title>N-terminome analysis of the human mitochondrial proteome.</title>
        <authorList>
            <person name="Vaca Jacome A.S."/>
            <person name="Rabilloud T."/>
            <person name="Schaeffer-Reiss C."/>
            <person name="Rompais M."/>
            <person name="Ayoub D."/>
            <person name="Lane L."/>
            <person name="Bairoch A."/>
            <person name="Van Dorsselaer A."/>
            <person name="Carapito C."/>
        </authorList>
    </citation>
    <scope>IDENTIFICATION BY MASS SPECTROMETRY [LARGE SCALE ANALYSIS]</scope>
</reference>
<reference key="27">
    <citation type="journal article" date="2000" name="Cell">
        <title>Structure of the ERM protein moesin reveals the FERM domain fold masked by an extended actin binding tail domain.</title>
        <authorList>
            <person name="Pearson M.A."/>
            <person name="Reczek D."/>
            <person name="Bretscher A."/>
            <person name="Karplus P.A."/>
        </authorList>
    </citation>
    <scope>X-RAY CRYSTALLOGRAPHY (1.9 ANGSTROMS) OF 4-577</scope>
</reference>
<reference key="28">
    <citation type="journal article" date="2001" name="Biochemistry">
        <title>The 2.7 A crystal structure of the activated FERM domain of moesin: an analysis of structural changes on activation.</title>
        <authorList>
            <person name="Edwards S.D."/>
            <person name="Keep N.H."/>
        </authorList>
    </citation>
    <scope>X-RAY CRYSTALLOGRAPHY (2.7 ANGSTROMS) OF 1-346</scope>
</reference>
<reference key="29">
    <citation type="journal article" date="2004" name="J. Cell Sci.">
        <title>The EBP50-moesin interaction involves a binding site regulated by direct masking on the FERM domain.</title>
        <authorList>
            <person name="Finnerty C.M."/>
            <person name="Chambers D."/>
            <person name="Ingraffea J."/>
            <person name="Faber H.R."/>
            <person name="Karplus P.A."/>
            <person name="Bretscher A."/>
        </authorList>
    </citation>
    <scope>X-RAY CRYSTALLOGRAPHY (3.5 ANGSTROMS) OF 1-297 IN COMPLEX WITH NHERF1</scope>
</reference>
<reference key="30">
    <citation type="journal article" date="2016" name="J. Allergy Clin. Immunol.">
        <title>X-linked primary immunodeficiency associated with hemizygous mutations in the moesin (MSN) gene.</title>
        <authorList>
            <person name="Lagresle-Peyrou C."/>
            <person name="Luce S."/>
            <person name="Ouchani F."/>
            <person name="Soheili T.S."/>
            <person name="Sadek H."/>
            <person name="Chouteau M."/>
            <person name="Durand A."/>
            <person name="Pic I."/>
            <person name="Majewski J."/>
            <person name="Brouzes C."/>
            <person name="Lambert N."/>
            <person name="Bohineust A."/>
            <person name="Verhoeyen E."/>
            <person name="Cosset F.L."/>
            <person name="Magerus-Chatinet A."/>
            <person name="Rieux-Laucat F."/>
            <person name="Gandemer V."/>
            <person name="Monnier D."/>
            <person name="Heijmans C."/>
            <person name="van Gijn M."/>
            <person name="Dalm V.A."/>
            <person name="Mahlaoui N."/>
            <person name="Stephan J.L."/>
            <person name="Picard C."/>
            <person name="Durandy A."/>
            <person name="Kracker S."/>
            <person name="Hivroz C."/>
            <person name="Jabado N."/>
            <person name="de Saint Basile G."/>
            <person name="Fischer A."/>
            <person name="Cavazzana M."/>
            <person name="Andre-Schmutz I."/>
        </authorList>
    </citation>
    <scope>VARIANT IMD50 TRP-171</scope>
    <scope>CHARACTERIZATION OF VARIANT IMD50 TRP-171</scope>
    <scope>FUNCTION</scope>
</reference>
<gene>
    <name evidence="26" type="primary">MSN</name>
</gene>
<keyword id="KW-0002">3D-structure</keyword>
<keyword id="KW-0007">Acetylation</keyword>
<keyword id="KW-1003">Cell membrane</keyword>
<keyword id="KW-0966">Cell projection</keyword>
<keyword id="KW-0963">Cytoplasm</keyword>
<keyword id="KW-0206">Cytoskeleton</keyword>
<keyword id="KW-0903">Direct protein sequencing</keyword>
<keyword id="KW-0225">Disease variant</keyword>
<keyword id="KW-0945">Host-virus interaction</keyword>
<keyword id="KW-0472">Membrane</keyword>
<keyword id="KW-0597">Phosphoprotein</keyword>
<keyword id="KW-1267">Proteomics identification</keyword>
<keyword id="KW-1185">Reference proteome</keyword>
<keyword id="KW-0702">S-nitrosylation</keyword>
<comment type="function">
    <text evidence="2 6 8 11 18 21 23">Ezrin-radixin-moesin (ERM) family protein that connects the actin cytoskeleton to the plasma membrane and thereby regulates the structure and function of specific domains of the cell cortex. Tethers actin filaments by oscillating between a resting and an activated state providing transient interactions between moesin and the actin cytoskeleton (PubMed:10212266). Once phosphorylated on its C-terminal threonine, moesin is activated leading to interaction with F-actin and cytoskeletal rearrangement (PubMed:10212266). These rearrangements regulate many cellular processes, including cell shape determination, membrane transport, and signal transduction (PubMed:12387735, PubMed:15039356). The role of moesin is particularly important in immunity acting on both T and B-cells homeostasis and self-tolerance, regulating lymphocyte egress from lymphoid organs (PubMed:9298994, PubMed:9616160). Modulates phagolysosomal biogenesis in macrophages (By similarity). Also participates in immunologic synapse formation (PubMed:27405666).</text>
</comment>
<comment type="activity regulation">
    <text evidence="6">A head-to-tail association, of the N-terminal and C-terminal halves results in a closed conformation (inactive form) which is incapable of actin or membrane-binding.</text>
</comment>
<comment type="subunit">
    <text evidence="2 6 7 8 10 12 13 16 19 21 22 23">In resting T-cells, part of a PAG1-NHERF1-MSN complex which is disrupted upon TCR activation. Interacts with NHERF1 (PubMed:15020681, PubMed:9314537). Interacts with PPP1R16B (PubMed:18586956). Interacts with SELPLG and SYK; these interactions mediate the activation of SYK by SELPLG (PubMed:12387735). Interacts with PDPN (via cytoplasmic domain); this interaction activates RHOA and promotes epithelial-mesenchymal transition (PubMed:17046996). Interacts with SPN/CD43 cytoplasmic tail (PubMed:11728332, PubMed:9616160). Interacts with CD44 (PubMed:9298994). Interacts with ICAM2 (By similarity). Interacts with ICAM3 (via C-terminus) (PubMed:9298994). Interacts with PDZD8 (PubMed:21549406). Interacts with F-actin (PubMed:10212266). Interacts with CD46 (PubMed:7884872). Interacts with PTPN6 (By similarity).</text>
</comment>
<comment type="subunit">
    <text evidence="20">(Microbial infection) Interacts with HIV-1 envelope protein gp120.</text>
</comment>
<comment type="interaction">
    <interactant intactId="EBI-528768">
        <id>P26038</id>
    </interactant>
    <interactant intactId="EBI-490245">
        <id>P16070</id>
        <label>CD44</label>
    </interactant>
    <organismsDiffer>false</organismsDiffer>
    <experiments>6</experiments>
</comment>
<comment type="interaction">
    <interactant intactId="EBI-528768">
        <id>P26038</id>
    </interactant>
    <interactant intactId="EBI-11959475">
        <id>P25791-3</id>
        <label>LMO2</label>
    </interactant>
    <organismsDiffer>false</organismsDiffer>
    <experiments>3</experiments>
</comment>
<comment type="interaction">
    <interactant intactId="EBI-528768">
        <id>P26038</id>
    </interactant>
    <interactant intactId="EBI-5323863">
        <id>Q5S007</id>
        <label>LRRK2</label>
    </interactant>
    <organismsDiffer>false</organismsDiffer>
    <experiments>19</experiments>
</comment>
<comment type="interaction">
    <interactant intactId="EBI-528768">
        <id>P26038</id>
    </interactant>
    <interactant intactId="EBI-349787">
        <id>O14745</id>
        <label>NHERF1</label>
    </interactant>
    <organismsDiffer>false</organismsDiffer>
    <experiments>4</experiments>
</comment>
<comment type="interaction">
    <interactant intactId="EBI-528768">
        <id>P26038</id>
    </interactant>
    <interactant intactId="EBI-710997">
        <id>P54274</id>
        <label>TERF1</label>
    </interactant>
    <organismsDiffer>false</organismsDiffer>
    <experiments>2</experiments>
</comment>
<comment type="interaction">
    <interactant intactId="EBI-528768">
        <id>P26038</id>
    </interactant>
    <interactant intactId="EBI-2693710">
        <id>Q5S006</id>
        <label>Lrrk2</label>
    </interactant>
    <organismsDiffer>true</organismsDiffer>
    <experiments>2</experiments>
</comment>
<comment type="interaction">
    <interactant intactId="EBI-528768">
        <id>P26038</id>
    </interactant>
    <interactant intactId="EBI-644181">
        <id>P97820</id>
        <label>Map4k4</label>
    </interactant>
    <organismsDiffer>true</organismsDiffer>
    <experiments>2</experiments>
</comment>
<comment type="interaction">
    <interactant intactId="EBI-528768">
        <id>P26038</id>
    </interactant>
    <interactant intactId="EBI-25474821">
        <id>P0DTC2</id>
        <label>S</label>
    </interactant>
    <organismsDiffer>true</organismsDiffer>
    <experiments>20</experiments>
</comment>
<comment type="subcellular location">
    <subcellularLocation>
        <location evidence="7 11 13 19 21">Cell membrane</location>
        <topology evidence="2">Peripheral membrane protein</topology>
        <orientation evidence="2">Cytoplasmic side</orientation>
    </subcellularLocation>
    <subcellularLocation>
        <location evidence="2">Cytoplasm</location>
        <location evidence="2">Cytoskeleton</location>
    </subcellularLocation>
    <subcellularLocation>
        <location evidence="2">Apical cell membrane</location>
        <topology evidence="2">Peripheral membrane protein</topology>
        <orientation evidence="2">Cytoplasmic side</orientation>
    </subcellularLocation>
    <subcellularLocation>
        <location evidence="2">Cell projection</location>
        <location evidence="2">Microvillus membrane</location>
        <topology evidence="2">Peripheral membrane protein</topology>
        <orientation evidence="2">Cytoplasmic side</orientation>
    </subcellularLocation>
    <subcellularLocation>
        <location evidence="2">Cell projection</location>
        <location evidence="2">Microvillus</location>
    </subcellularLocation>
    <text evidence="2 13 21">Phosphorylated form is enriched in microvilli-like structures at apical membrane. Increased cell membrane localization of both phosphorylated and non-phosphorylated forms seen after thrombin treatment (By similarity). Localizes at the uropods of T lymphoblasts.</text>
</comment>
<comment type="tissue specificity">
    <text>In all tissues and cultured cells studied.</text>
</comment>
<comment type="domain">
    <text evidence="25">The [IL]-x-C-x-x-[DE] motif is a proposed target motif for cysteine S-nitrosylation mediated by the iNOS-S100A8/A9 transnitrosylase complex.</text>
</comment>
<comment type="PTM">
    <text evidence="1 15">Phosphorylation on Thr-558 is crucial for the formation of microvilli-like structures. Phosphorylation by ROCK2 suppresses the head-to-tail association of the N-terminal and C-terminal halves resulting in an opened conformation which is capable of actin and membrane-binding (By similarity). Phosphorylation on Thr-558 by STK10 negatively regulates lymphocyte migration and polarization.</text>
</comment>
<comment type="PTM">
    <text evidence="17">S-nitrosylation of Cys-117 is induced by interferon-gamma and oxidatively-modified low-densitity lipoprotein (LDL(ox)) implicating the iNOS-S100A8/9 transnitrosylase complex.</text>
</comment>
<comment type="disease" evidence="18">
    <disease id="DI-04900">
        <name>Immunodeficiency 50</name>
        <acronym>IMD50</acronym>
        <description>A primary immunodeficiency disorder characterized by onset of recurrent bacterial or varicella zoster virus infections in early childhood, profound lymphopenia, hypogammaglobulinemia, fluctuating monocytopenia and neutropenia, and a poor immune response to vaccine antigens.</description>
        <dbReference type="MIM" id="300988"/>
    </disease>
    <text>The disease is caused by variants affecting the gene represented in this entry.</text>
</comment>
<comment type="online information" name="Atlas of Genetics and Cytogenetics in Oncology and Haematology">
    <link uri="https://atlasgeneticsoncology.org/gene/363/MSN"/>
</comment>
<evidence type="ECO:0000250" key="1"/>
<evidence type="ECO:0000250" key="2">
    <source>
        <dbReference type="UniProtKB" id="P26041"/>
    </source>
</evidence>
<evidence type="ECO:0000250" key="3">
    <source>
        <dbReference type="UniProtKB" id="P26043"/>
    </source>
</evidence>
<evidence type="ECO:0000255" key="4">
    <source>
        <dbReference type="PROSITE-ProRule" id="PRU00084"/>
    </source>
</evidence>
<evidence type="ECO:0000256" key="5">
    <source>
        <dbReference type="SAM" id="MobiDB-lite"/>
    </source>
</evidence>
<evidence type="ECO:0000269" key="6">
    <source>
    </source>
</evidence>
<evidence type="ECO:0000269" key="7">
    <source>
    </source>
</evidence>
<evidence type="ECO:0000269" key="8">
    <source>
    </source>
</evidence>
<evidence type="ECO:0000269" key="9">
    <source>
    </source>
</evidence>
<evidence type="ECO:0000269" key="10">
    <source>
    </source>
</evidence>
<evidence type="ECO:0000269" key="11">
    <source>
    </source>
</evidence>
<evidence type="ECO:0000269" key="12">
    <source>
    </source>
</evidence>
<evidence type="ECO:0000269" key="13">
    <source>
    </source>
</evidence>
<evidence type="ECO:0000269" key="14">
    <source>
    </source>
</evidence>
<evidence type="ECO:0000269" key="15">
    <source>
    </source>
</evidence>
<evidence type="ECO:0000269" key="16">
    <source>
    </source>
</evidence>
<evidence type="ECO:0000269" key="17">
    <source>
    </source>
</evidence>
<evidence type="ECO:0000269" key="18">
    <source>
    </source>
</evidence>
<evidence type="ECO:0000269" key="19">
    <source>
    </source>
</evidence>
<evidence type="ECO:0000269" key="20">
    <source>
    </source>
</evidence>
<evidence type="ECO:0000269" key="21">
    <source>
    </source>
</evidence>
<evidence type="ECO:0000269" key="22">
    <source>
    </source>
</evidence>
<evidence type="ECO:0000269" key="23">
    <source>
    </source>
</evidence>
<evidence type="ECO:0000303" key="24">
    <source>
    </source>
</evidence>
<evidence type="ECO:0000305" key="25">
    <source>
    </source>
</evidence>
<evidence type="ECO:0000312" key="26">
    <source>
        <dbReference type="HGNC" id="HGNC:7373"/>
    </source>
</evidence>
<evidence type="ECO:0007744" key="27">
    <source>
    </source>
</evidence>
<evidence type="ECO:0007744" key="28">
    <source>
    </source>
</evidence>
<evidence type="ECO:0007744" key="29">
    <source>
    </source>
</evidence>
<evidence type="ECO:0007829" key="30">
    <source>
        <dbReference type="PDB" id="1EF1"/>
    </source>
</evidence>
<evidence type="ECO:0007829" key="31">
    <source>
        <dbReference type="PDB" id="8CIR"/>
    </source>
</evidence>
<evidence type="ECO:0007829" key="32">
    <source>
        <dbReference type="PDB" id="8CIS"/>
    </source>
</evidence>
<evidence type="ECO:0007829" key="33">
    <source>
        <dbReference type="PDB" id="8CIU"/>
    </source>
</evidence>